<proteinExistence type="inferred from homology"/>
<accession>A9MV77</accession>
<reference key="1">
    <citation type="submission" date="2007-11" db="EMBL/GenBank/DDBJ databases">
        <authorList>
            <consortium name="The Salmonella enterica serovar Paratyphi B Genome Sequencing Project"/>
            <person name="McClelland M."/>
            <person name="Sanderson E.K."/>
            <person name="Porwollik S."/>
            <person name="Spieth J."/>
            <person name="Clifton W.S."/>
            <person name="Fulton R."/>
            <person name="Cordes M."/>
            <person name="Wollam A."/>
            <person name="Shah N."/>
            <person name="Pepin K."/>
            <person name="Bhonagiri V."/>
            <person name="Nash W."/>
            <person name="Johnson M."/>
            <person name="Thiruvilangam P."/>
            <person name="Wilson R."/>
        </authorList>
    </citation>
    <scope>NUCLEOTIDE SEQUENCE [LARGE SCALE GENOMIC DNA]</scope>
    <source>
        <strain>ATCC BAA-1250 / SPB7</strain>
    </source>
</reference>
<feature type="chain" id="PRO_1000081018" description="Fluoride-specific ion channel FluC">
    <location>
        <begin position="1"/>
        <end position="127"/>
    </location>
</feature>
<feature type="transmembrane region" description="Helical" evidence="1">
    <location>
        <begin position="4"/>
        <end position="24"/>
    </location>
</feature>
<feature type="transmembrane region" description="Helical" evidence="1">
    <location>
        <begin position="35"/>
        <end position="55"/>
    </location>
</feature>
<feature type="transmembrane region" description="Helical" evidence="1">
    <location>
        <begin position="71"/>
        <end position="91"/>
    </location>
</feature>
<feature type="transmembrane region" description="Helical" evidence="1">
    <location>
        <begin position="103"/>
        <end position="123"/>
    </location>
</feature>
<feature type="binding site" evidence="1">
    <location>
        <position position="75"/>
    </location>
    <ligand>
        <name>Na(+)</name>
        <dbReference type="ChEBI" id="CHEBI:29101"/>
        <note>structural</note>
    </ligand>
</feature>
<feature type="binding site" evidence="1">
    <location>
        <position position="78"/>
    </location>
    <ligand>
        <name>Na(+)</name>
        <dbReference type="ChEBI" id="CHEBI:29101"/>
        <note>structural</note>
    </ligand>
</feature>
<dbReference type="EMBL" id="CP000886">
    <property type="protein sequence ID" value="ABX68289.1"/>
    <property type="molecule type" value="Genomic_DNA"/>
</dbReference>
<dbReference type="RefSeq" id="WP_000939753.1">
    <property type="nucleotide sequence ID" value="NC_010102.1"/>
</dbReference>
<dbReference type="SMR" id="A9MV77"/>
<dbReference type="KEGG" id="spq:SPAB_02925"/>
<dbReference type="PATRIC" id="fig|1016998.12.peg.2757"/>
<dbReference type="HOGENOM" id="CLU_114342_3_3_6"/>
<dbReference type="BioCyc" id="SENT1016998:SPAB_RS11915-MONOMER"/>
<dbReference type="Proteomes" id="UP000008556">
    <property type="component" value="Chromosome"/>
</dbReference>
<dbReference type="GO" id="GO:0005886">
    <property type="term" value="C:plasma membrane"/>
    <property type="evidence" value="ECO:0007669"/>
    <property type="project" value="UniProtKB-SubCell"/>
</dbReference>
<dbReference type="GO" id="GO:0062054">
    <property type="term" value="F:fluoride channel activity"/>
    <property type="evidence" value="ECO:0007669"/>
    <property type="project" value="UniProtKB-UniRule"/>
</dbReference>
<dbReference type="GO" id="GO:0046872">
    <property type="term" value="F:metal ion binding"/>
    <property type="evidence" value="ECO:0007669"/>
    <property type="project" value="UniProtKB-KW"/>
</dbReference>
<dbReference type="GO" id="GO:0140114">
    <property type="term" value="P:cellular detoxification of fluoride"/>
    <property type="evidence" value="ECO:0007669"/>
    <property type="project" value="UniProtKB-UniRule"/>
</dbReference>
<dbReference type="HAMAP" id="MF_00454">
    <property type="entry name" value="FluC"/>
    <property type="match status" value="1"/>
</dbReference>
<dbReference type="InterPro" id="IPR003691">
    <property type="entry name" value="FluC"/>
</dbReference>
<dbReference type="NCBIfam" id="TIGR00494">
    <property type="entry name" value="crcB"/>
    <property type="match status" value="1"/>
</dbReference>
<dbReference type="NCBIfam" id="NF010792">
    <property type="entry name" value="PRK14196.1"/>
    <property type="match status" value="1"/>
</dbReference>
<dbReference type="PANTHER" id="PTHR28259">
    <property type="entry name" value="FLUORIDE EXPORT PROTEIN 1-RELATED"/>
    <property type="match status" value="1"/>
</dbReference>
<dbReference type="PANTHER" id="PTHR28259:SF1">
    <property type="entry name" value="FLUORIDE EXPORT PROTEIN 1-RELATED"/>
    <property type="match status" value="1"/>
</dbReference>
<dbReference type="Pfam" id="PF02537">
    <property type="entry name" value="CRCB"/>
    <property type="match status" value="1"/>
</dbReference>
<keyword id="KW-0997">Cell inner membrane</keyword>
<keyword id="KW-1003">Cell membrane</keyword>
<keyword id="KW-0407">Ion channel</keyword>
<keyword id="KW-0406">Ion transport</keyword>
<keyword id="KW-0472">Membrane</keyword>
<keyword id="KW-0479">Metal-binding</keyword>
<keyword id="KW-0915">Sodium</keyword>
<keyword id="KW-0812">Transmembrane</keyword>
<keyword id="KW-1133">Transmembrane helix</keyword>
<keyword id="KW-0813">Transport</keyword>
<gene>
    <name evidence="1" type="primary">fluC</name>
    <name evidence="1" type="synonym">crcB</name>
    <name type="ordered locus">SPAB_02925</name>
</gene>
<evidence type="ECO:0000255" key="1">
    <source>
        <dbReference type="HAMAP-Rule" id="MF_00454"/>
    </source>
</evidence>
<comment type="function">
    <text evidence="1">Fluoride-specific ion channel. Important for reducing fluoride concentration in the cell, thus reducing its toxicity.</text>
</comment>
<comment type="catalytic activity">
    <reaction evidence="1">
        <text>fluoride(in) = fluoride(out)</text>
        <dbReference type="Rhea" id="RHEA:76159"/>
        <dbReference type="ChEBI" id="CHEBI:17051"/>
    </reaction>
    <physiologicalReaction direction="left-to-right" evidence="1">
        <dbReference type="Rhea" id="RHEA:76160"/>
    </physiologicalReaction>
</comment>
<comment type="activity regulation">
    <text evidence="1">Na(+) is not transported, but it plays an essential structural role and its presence is essential for fluoride channel function.</text>
</comment>
<comment type="subcellular location">
    <subcellularLocation>
        <location evidence="1">Cell inner membrane</location>
        <topology evidence="1">Multi-pass membrane protein</topology>
    </subcellularLocation>
</comment>
<comment type="similarity">
    <text evidence="1">Belongs to the fluoride channel Fluc/FEX (TC 1.A.43) family.</text>
</comment>
<sequence length="127" mass="13849">MLQLLLAVFIGGGTGSVARWMLSMRFNPLHQAIPIGTLTANLLGAFIIGMGFAWFNRMTHIDPMWKVLITTGFCGGLTTFSTFSAEVVFLLQEGRFGWALLNVLINLLGSFAMTALAFWLFSAAAAR</sequence>
<organism>
    <name type="scientific">Salmonella paratyphi B (strain ATCC BAA-1250 / SPB7)</name>
    <dbReference type="NCBI Taxonomy" id="1016998"/>
    <lineage>
        <taxon>Bacteria</taxon>
        <taxon>Pseudomonadati</taxon>
        <taxon>Pseudomonadota</taxon>
        <taxon>Gammaproteobacteria</taxon>
        <taxon>Enterobacterales</taxon>
        <taxon>Enterobacteriaceae</taxon>
        <taxon>Salmonella</taxon>
    </lineage>
</organism>
<protein>
    <recommendedName>
        <fullName evidence="1">Fluoride-specific ion channel FluC</fullName>
    </recommendedName>
</protein>
<name>FLUC_SALPB</name>